<name>OPN4_RAT</name>
<accession>Q8R456</accession>
<keyword id="KW-0090">Biological rhythms</keyword>
<keyword id="KW-1003">Cell membrane</keyword>
<keyword id="KW-0966">Cell projection</keyword>
<keyword id="KW-0157">Chromophore</keyword>
<keyword id="KW-1015">Disulfide bond</keyword>
<keyword id="KW-0297">G-protein coupled receptor</keyword>
<keyword id="KW-0325">Glycoprotein</keyword>
<keyword id="KW-0472">Membrane</keyword>
<keyword id="KW-0600">Photoreceptor protein</keyword>
<keyword id="KW-0675">Receptor</keyword>
<keyword id="KW-1185">Reference proteome</keyword>
<keyword id="KW-0681">Retinal protein</keyword>
<keyword id="KW-0716">Sensory transduction</keyword>
<keyword id="KW-0807">Transducer</keyword>
<keyword id="KW-0812">Transmembrane</keyword>
<keyword id="KW-1133">Transmembrane helix</keyword>
<dbReference type="EMBL" id="AY072689">
    <property type="protein sequence ID" value="AAL61854.1"/>
    <property type="molecule type" value="mRNA"/>
</dbReference>
<dbReference type="RefSeq" id="NP_620215.1">
    <property type="nucleotide sequence ID" value="NM_138860.1"/>
</dbReference>
<dbReference type="RefSeq" id="XP_017455477.1">
    <property type="nucleotide sequence ID" value="XM_017599988.1"/>
</dbReference>
<dbReference type="RefSeq" id="XP_017455478.1">
    <property type="nucleotide sequence ID" value="XM_017599989.1"/>
</dbReference>
<dbReference type="SMR" id="Q8R456"/>
<dbReference type="FunCoup" id="Q8R456">
    <property type="interactions" value="141"/>
</dbReference>
<dbReference type="STRING" id="10116.ENSRNOP00000069548"/>
<dbReference type="GlyCosmos" id="Q8R456">
    <property type="glycosylation" value="2 sites, No reported glycans"/>
</dbReference>
<dbReference type="GlyGen" id="Q8R456">
    <property type="glycosylation" value="2 sites"/>
</dbReference>
<dbReference type="iPTMnet" id="Q8R456"/>
<dbReference type="PhosphoSitePlus" id="Q8R456"/>
<dbReference type="PaxDb" id="10116-ENSRNOP00000015642"/>
<dbReference type="Ensembl" id="ENSRNOT00000091315.2">
    <property type="protein sequence ID" value="ENSRNOP00000069548.1"/>
    <property type="gene ID" value="ENSRNOG00000053893.2"/>
</dbReference>
<dbReference type="GeneID" id="192223"/>
<dbReference type="KEGG" id="rno:192223"/>
<dbReference type="UCSC" id="RGD:621701">
    <property type="organism name" value="rat"/>
</dbReference>
<dbReference type="AGR" id="RGD:621701"/>
<dbReference type="CTD" id="94233"/>
<dbReference type="RGD" id="621701">
    <property type="gene designation" value="Opn4"/>
</dbReference>
<dbReference type="eggNOG" id="KOG3656">
    <property type="taxonomic scope" value="Eukaryota"/>
</dbReference>
<dbReference type="GeneTree" id="ENSGT01120000271853"/>
<dbReference type="HOGENOM" id="CLU_009579_3_12_1"/>
<dbReference type="InParanoid" id="Q8R456"/>
<dbReference type="OMA" id="WKMAKIV"/>
<dbReference type="OrthoDB" id="9996086at2759"/>
<dbReference type="PhylomeDB" id="Q8R456"/>
<dbReference type="TreeFam" id="TF324998"/>
<dbReference type="Reactome" id="R-RNO-416476">
    <property type="pathway name" value="G alpha (q) signalling events"/>
</dbReference>
<dbReference type="Reactome" id="R-RNO-419771">
    <property type="pathway name" value="Opsins"/>
</dbReference>
<dbReference type="PRO" id="PR:Q8R456"/>
<dbReference type="Proteomes" id="UP000002494">
    <property type="component" value="Chromosome 16"/>
</dbReference>
<dbReference type="Bgee" id="ENSRNOG00000053893">
    <property type="expression patterns" value="Expressed in skeletal muscle tissue and 4 other cell types or tissues"/>
</dbReference>
<dbReference type="GO" id="GO:0030424">
    <property type="term" value="C:axon"/>
    <property type="evidence" value="ECO:0007669"/>
    <property type="project" value="UniProtKB-SubCell"/>
</dbReference>
<dbReference type="GO" id="GO:0030425">
    <property type="term" value="C:dendrite"/>
    <property type="evidence" value="ECO:0007669"/>
    <property type="project" value="UniProtKB-SubCell"/>
</dbReference>
<dbReference type="GO" id="GO:0016020">
    <property type="term" value="C:membrane"/>
    <property type="evidence" value="ECO:0000304"/>
    <property type="project" value="UniProtKB"/>
</dbReference>
<dbReference type="GO" id="GO:0043204">
    <property type="term" value="C:perikaryon"/>
    <property type="evidence" value="ECO:0007669"/>
    <property type="project" value="UniProtKB-SubCell"/>
</dbReference>
<dbReference type="GO" id="GO:0005886">
    <property type="term" value="C:plasma membrane"/>
    <property type="evidence" value="ECO:0000250"/>
    <property type="project" value="UniProtKB"/>
</dbReference>
<dbReference type="GO" id="GO:1990913">
    <property type="term" value="C:sperm head plasma membrane"/>
    <property type="evidence" value="ECO:0000266"/>
    <property type="project" value="RGD"/>
</dbReference>
<dbReference type="GO" id="GO:0005502">
    <property type="term" value="F:11-cis retinal binding"/>
    <property type="evidence" value="ECO:0000250"/>
    <property type="project" value="UniProtKB"/>
</dbReference>
<dbReference type="GO" id="GO:0008020">
    <property type="term" value="F:G protein-coupled photoreceptor activity"/>
    <property type="evidence" value="ECO:0000314"/>
    <property type="project" value="RGD"/>
</dbReference>
<dbReference type="GO" id="GO:0071482">
    <property type="term" value="P:cellular response to light stimulus"/>
    <property type="evidence" value="ECO:0000318"/>
    <property type="project" value="GO_Central"/>
</dbReference>
<dbReference type="GO" id="GO:0050960">
    <property type="term" value="P:detection of temperature stimulus involved in thermoception"/>
    <property type="evidence" value="ECO:0000266"/>
    <property type="project" value="RGD"/>
</dbReference>
<dbReference type="GO" id="GO:0007186">
    <property type="term" value="P:G protein-coupled receptor signaling pathway"/>
    <property type="evidence" value="ECO:0000318"/>
    <property type="project" value="GO_Central"/>
</dbReference>
<dbReference type="GO" id="GO:1990384">
    <property type="term" value="P:hyaloid vascular plexus regression"/>
    <property type="evidence" value="ECO:0000250"/>
    <property type="project" value="UniProtKB"/>
</dbReference>
<dbReference type="GO" id="GO:0007634">
    <property type="term" value="P:optokinetic behavior"/>
    <property type="evidence" value="ECO:0000250"/>
    <property type="project" value="UniProtKB"/>
</dbReference>
<dbReference type="GO" id="GO:0007602">
    <property type="term" value="P:phototransduction"/>
    <property type="evidence" value="ECO:0000314"/>
    <property type="project" value="RGD"/>
</dbReference>
<dbReference type="GO" id="GO:0042752">
    <property type="term" value="P:regulation of circadian rhythm"/>
    <property type="evidence" value="ECO:0000250"/>
    <property type="project" value="UniProtKB"/>
</dbReference>
<dbReference type="GO" id="GO:0060041">
    <property type="term" value="P:retina development in camera-type eye"/>
    <property type="evidence" value="ECO:0000266"/>
    <property type="project" value="RGD"/>
</dbReference>
<dbReference type="GO" id="GO:0048511">
    <property type="term" value="P:rhythmic process"/>
    <property type="evidence" value="ECO:0007669"/>
    <property type="project" value="UniProtKB-KW"/>
</dbReference>
<dbReference type="GO" id="GO:0043052">
    <property type="term" value="P:thermotaxis"/>
    <property type="evidence" value="ECO:0000266"/>
    <property type="project" value="RGD"/>
</dbReference>
<dbReference type="GO" id="GO:0007601">
    <property type="term" value="P:visual perception"/>
    <property type="evidence" value="ECO:0007669"/>
    <property type="project" value="InterPro"/>
</dbReference>
<dbReference type="FunFam" id="1.20.1070.10:FF:000083">
    <property type="entry name" value="Melanopsin 1"/>
    <property type="match status" value="1"/>
</dbReference>
<dbReference type="Gene3D" id="1.20.1070.10">
    <property type="entry name" value="Rhodopsin 7-helix transmembrane proteins"/>
    <property type="match status" value="1"/>
</dbReference>
<dbReference type="InterPro" id="IPR050125">
    <property type="entry name" value="GPCR_opsins"/>
</dbReference>
<dbReference type="InterPro" id="IPR000276">
    <property type="entry name" value="GPCR_Rhodpsn"/>
</dbReference>
<dbReference type="InterPro" id="IPR017452">
    <property type="entry name" value="GPCR_Rhodpsn_7TM"/>
</dbReference>
<dbReference type="InterPro" id="IPR001760">
    <property type="entry name" value="Opsin"/>
</dbReference>
<dbReference type="InterPro" id="IPR027430">
    <property type="entry name" value="Retinal_BS"/>
</dbReference>
<dbReference type="PANTHER" id="PTHR24240">
    <property type="entry name" value="OPSIN"/>
    <property type="match status" value="1"/>
</dbReference>
<dbReference type="Pfam" id="PF00001">
    <property type="entry name" value="7tm_1"/>
    <property type="match status" value="1"/>
</dbReference>
<dbReference type="PRINTS" id="PR00237">
    <property type="entry name" value="GPCRRHODOPSN"/>
</dbReference>
<dbReference type="PRINTS" id="PR00238">
    <property type="entry name" value="OPSIN"/>
</dbReference>
<dbReference type="SMART" id="SM01381">
    <property type="entry name" value="7TM_GPCR_Srsx"/>
    <property type="match status" value="1"/>
</dbReference>
<dbReference type="SUPFAM" id="SSF81321">
    <property type="entry name" value="Family A G protein-coupled receptor-like"/>
    <property type="match status" value="1"/>
</dbReference>
<dbReference type="PROSITE" id="PS00237">
    <property type="entry name" value="G_PROTEIN_RECEP_F1_1"/>
    <property type="match status" value="1"/>
</dbReference>
<dbReference type="PROSITE" id="PS50262">
    <property type="entry name" value="G_PROTEIN_RECEP_F1_2"/>
    <property type="match status" value="1"/>
</dbReference>
<dbReference type="PROSITE" id="PS00238">
    <property type="entry name" value="OPSIN"/>
    <property type="match status" value="1"/>
</dbReference>
<protein>
    <recommendedName>
        <fullName>Melanopsin</fullName>
    </recommendedName>
    <alternativeName>
        <fullName>Opsin-4</fullName>
    </alternativeName>
</protein>
<evidence type="ECO:0000250" key="1"/>
<evidence type="ECO:0000250" key="2">
    <source>
        <dbReference type="UniProtKB" id="Q9QXZ9"/>
    </source>
</evidence>
<evidence type="ECO:0000255" key="3"/>
<evidence type="ECO:0000255" key="4">
    <source>
        <dbReference type="PROSITE-ProRule" id="PRU00521"/>
    </source>
</evidence>
<evidence type="ECO:0000256" key="5">
    <source>
        <dbReference type="SAM" id="MobiDB-lite"/>
    </source>
</evidence>
<evidence type="ECO:0000269" key="6">
    <source>
    </source>
</evidence>
<evidence type="ECO:0000305" key="7"/>
<evidence type="ECO:0000312" key="8">
    <source>
        <dbReference type="EMBL" id="AAL61854.1"/>
    </source>
</evidence>
<evidence type="ECO:0000312" key="9">
    <source>
        <dbReference type="RGD" id="621701"/>
    </source>
</evidence>
<comment type="function">
    <text evidence="2">Photoreceptor that binds cis-retinaldehydes (By similarity). Contributes to pupillar reflex, photoentrainment and other non-image forming responses to light (By similarity). May be involved in the optokinetic visual tracking response (By similarity). May be involved in the regulation of retinal hyaloid vessel growth and regression (By similarity).</text>
</comment>
<comment type="subcellular location">
    <subcellularLocation>
        <location evidence="6">Cell membrane</location>
        <topology evidence="3">Multi-pass membrane protein</topology>
    </subcellularLocation>
    <subcellularLocation>
        <location evidence="2">Cell projection</location>
        <location evidence="2">Axon</location>
    </subcellularLocation>
    <subcellularLocation>
        <location evidence="2">Cell projection</location>
        <location evidence="2">Dendrite</location>
    </subcellularLocation>
    <subcellularLocation>
        <location evidence="2">Perikaryon</location>
    </subcellularLocation>
</comment>
<comment type="tissue specificity">
    <text evidence="6">Eye; expressed in a photosensitive subset of retinal ganglion cells (at protein level).</text>
</comment>
<comment type="similarity">
    <text evidence="4">Belongs to the G-protein coupled receptor 1 family. Opsin subfamily.</text>
</comment>
<sequence length="474" mass="52407">MNSPSESRVPSSLTQDPSFTASPALLQGIWNSTQNISVRVQLLSVSPTTPGLQAAAWVPFPTVDVPDHAHYTLGTVILLVGLTGMLGNLTVIYTFCRNRGLRTPANMLIINLAVSDFLMSFTQAPVFFASSLYKKWLFGETGCKFYAFCGAVFGIVSMITLTAIAMDRYLVITRPLATIGMRSKRRTALVLLGVWLYALAWSLPPFFGWSAYVPEGLLTSCSWDYVTFTPLVRAYTMLLFCFVFFLPLLIIIFCYIFIFRAIRETGRACEGCGESPLRRRQWQRLQSEWKMAKVALIVILLFVLSWAPYSTVALVGFAGYSHILTPYMSSVPAVIAKASAIHNPIIYAITHPKYRAAIAQHLPCLGVLLGVSGQRSHPSLSYRSTHRSTLSSQSSDLSWISGQKRQESLGSESEVGWTDTETTAAWGAAQQASGQSFCSHDLEDGEVKAPSSPQEQKSKTPKTKRHLPSLDRRM</sequence>
<proteinExistence type="evidence at protein level"/>
<reference evidence="7 8" key="1">
    <citation type="journal article" date="2002" name="Science">
        <title>Melanopsin-containing retinal ganglion cells: architecture, projections, and intrinsic photosensitivity.</title>
        <authorList>
            <person name="Hattar S."/>
            <person name="Liao H.-W."/>
            <person name="Takao M."/>
            <person name="Berson D.M."/>
            <person name="Yau K.-W."/>
        </authorList>
    </citation>
    <scope>NUCLEOTIDE SEQUENCE [MRNA]</scope>
    <scope>SUBCELLULAR LOCATION</scope>
    <scope>TISSUE SPECIFICITY</scope>
    <source>
        <strain evidence="8">Sprague-Dawley</strain>
        <tissue evidence="8">Retina</tissue>
    </source>
</reference>
<organism>
    <name type="scientific">Rattus norvegicus</name>
    <name type="common">Rat</name>
    <dbReference type="NCBI Taxonomy" id="10116"/>
    <lineage>
        <taxon>Eukaryota</taxon>
        <taxon>Metazoa</taxon>
        <taxon>Chordata</taxon>
        <taxon>Craniata</taxon>
        <taxon>Vertebrata</taxon>
        <taxon>Euteleostomi</taxon>
        <taxon>Mammalia</taxon>
        <taxon>Eutheria</taxon>
        <taxon>Euarchontoglires</taxon>
        <taxon>Glires</taxon>
        <taxon>Rodentia</taxon>
        <taxon>Myomorpha</taxon>
        <taxon>Muroidea</taxon>
        <taxon>Muridae</taxon>
        <taxon>Murinae</taxon>
        <taxon>Rattus</taxon>
    </lineage>
</organism>
<gene>
    <name evidence="9" type="primary">Opn4</name>
</gene>
<feature type="chain" id="PRO_0000233062" description="Melanopsin">
    <location>
        <begin position="1"/>
        <end position="474"/>
    </location>
</feature>
<feature type="topological domain" description="Extracellular" evidence="3">
    <location>
        <begin position="1"/>
        <end position="72"/>
    </location>
</feature>
<feature type="transmembrane region" description="Helical; Name=1" evidence="3">
    <location>
        <begin position="73"/>
        <end position="93"/>
    </location>
</feature>
<feature type="topological domain" description="Cytoplasmic" evidence="3">
    <location>
        <begin position="94"/>
        <end position="107"/>
    </location>
</feature>
<feature type="transmembrane region" description="Helical; Name=2" evidence="3">
    <location>
        <begin position="108"/>
        <end position="128"/>
    </location>
</feature>
<feature type="topological domain" description="Extracellular" evidence="3">
    <location>
        <begin position="129"/>
        <end position="144"/>
    </location>
</feature>
<feature type="transmembrane region" description="Helical; Name=3" evidence="3">
    <location>
        <begin position="145"/>
        <end position="165"/>
    </location>
</feature>
<feature type="topological domain" description="Cytoplasmic" evidence="3">
    <location>
        <begin position="166"/>
        <end position="188"/>
    </location>
</feature>
<feature type="transmembrane region" description="Helical; Name=4" evidence="3">
    <location>
        <begin position="189"/>
        <end position="209"/>
    </location>
</feature>
<feature type="topological domain" description="Extracellular" evidence="3">
    <location>
        <begin position="210"/>
        <end position="238"/>
    </location>
</feature>
<feature type="transmembrane region" description="Helical; Name=5" evidence="3">
    <location>
        <begin position="239"/>
        <end position="259"/>
    </location>
</feature>
<feature type="topological domain" description="Cytoplasmic" evidence="3">
    <location>
        <begin position="260"/>
        <end position="293"/>
    </location>
</feature>
<feature type="transmembrane region" description="Helical; Name=6" evidence="3">
    <location>
        <begin position="294"/>
        <end position="314"/>
    </location>
</feature>
<feature type="topological domain" description="Extracellular" evidence="3">
    <location>
        <begin position="315"/>
        <end position="355"/>
    </location>
</feature>
<feature type="transmembrane region" description="Helical; Name=7" evidence="3">
    <location>
        <begin position="356"/>
        <end position="372"/>
    </location>
</feature>
<feature type="topological domain" description="Cytoplasmic" evidence="3">
    <location>
        <begin position="373"/>
        <end position="474"/>
    </location>
</feature>
<feature type="region of interest" description="Disordered" evidence="5">
    <location>
        <begin position="428"/>
        <end position="474"/>
    </location>
</feature>
<feature type="modified residue" description="N6-(retinylidene)lysine" evidence="1">
    <location>
        <position position="337"/>
    </location>
</feature>
<feature type="glycosylation site" description="N-linked (GlcNAc...) asparagine" evidence="3">
    <location>
        <position position="31"/>
    </location>
</feature>
<feature type="glycosylation site" description="N-linked (GlcNAc...) asparagine" evidence="3">
    <location>
        <position position="35"/>
    </location>
</feature>
<feature type="disulfide bond" evidence="4">
    <location>
        <begin position="143"/>
        <end position="221"/>
    </location>
</feature>